<comment type="subcellular location">
    <subcellularLocation>
        <location evidence="2">Cell outer membrane</location>
        <topology evidence="1">Lipid-anchor</topology>
    </subcellularLocation>
</comment>
<comment type="similarity">
    <text evidence="2">Belongs to the Pcp/SlyB lipoprotein family.</text>
</comment>
<organism>
    <name type="scientific">Salmonella typhimurium (strain LT2 / SGSC1412 / ATCC 700720)</name>
    <dbReference type="NCBI Taxonomy" id="99287"/>
    <lineage>
        <taxon>Bacteria</taxon>
        <taxon>Pseudomonadati</taxon>
        <taxon>Pseudomonadota</taxon>
        <taxon>Gammaproteobacteria</taxon>
        <taxon>Enterobacterales</taxon>
        <taxon>Enterobacteriaceae</taxon>
        <taxon>Salmonella</taxon>
    </lineage>
</organism>
<accession>P0A1X0</accession>
<accession>Q53549</accession>
<evidence type="ECO:0000255" key="1">
    <source>
        <dbReference type="PROSITE-ProRule" id="PRU00303"/>
    </source>
</evidence>
<evidence type="ECO:0000305" key="2"/>
<evidence type="ECO:0000305" key="3">
    <source>
    </source>
</evidence>
<name>SLYB_SALTY</name>
<keyword id="KW-0998">Cell outer membrane</keyword>
<keyword id="KW-0449">Lipoprotein</keyword>
<keyword id="KW-0472">Membrane</keyword>
<keyword id="KW-0564">Palmitate</keyword>
<keyword id="KW-1185">Reference proteome</keyword>
<keyword id="KW-0732">Signal</keyword>
<dbReference type="EMBL" id="S80790">
    <property type="protein sequence ID" value="AAB35871.2"/>
    <property type="molecule type" value="Genomic_DNA"/>
</dbReference>
<dbReference type="EMBL" id="AE006468">
    <property type="protein sequence ID" value="AAL20367.1"/>
    <property type="molecule type" value="Genomic_DNA"/>
</dbReference>
<dbReference type="RefSeq" id="NP_460408.1">
    <property type="nucleotide sequence ID" value="NC_003197.2"/>
</dbReference>
<dbReference type="RefSeq" id="WP_000597179.1">
    <property type="nucleotide sequence ID" value="NC_003197.2"/>
</dbReference>
<dbReference type="SMR" id="P0A1X0"/>
<dbReference type="STRING" id="99287.STM1445"/>
<dbReference type="PaxDb" id="99287-STM1445"/>
<dbReference type="GeneID" id="1252963"/>
<dbReference type="KEGG" id="stm:STM1445"/>
<dbReference type="PATRIC" id="fig|99287.12.peg.1528"/>
<dbReference type="HOGENOM" id="CLU_090265_3_1_6"/>
<dbReference type="OMA" id="IVVVQKY"/>
<dbReference type="PhylomeDB" id="P0A1X0"/>
<dbReference type="BioCyc" id="SENT99287:STM1445-MONOMER"/>
<dbReference type="Proteomes" id="UP000001014">
    <property type="component" value="Chromosome"/>
</dbReference>
<dbReference type="GO" id="GO:0009279">
    <property type="term" value="C:cell outer membrane"/>
    <property type="evidence" value="ECO:0000318"/>
    <property type="project" value="GO_Central"/>
</dbReference>
<dbReference type="InterPro" id="IPR051407">
    <property type="entry name" value="Bact_OM_lipoprot/Surf_antigen"/>
</dbReference>
<dbReference type="InterPro" id="IPR008816">
    <property type="entry name" value="Gly_zipper_2TM_dom"/>
</dbReference>
<dbReference type="PANTHER" id="PTHR35603">
    <property type="match status" value="1"/>
</dbReference>
<dbReference type="PANTHER" id="PTHR35603:SF1">
    <property type="entry name" value="OUTER MEMBRANE LIPOPROTEIN SLYB"/>
    <property type="match status" value="1"/>
</dbReference>
<dbReference type="Pfam" id="PF05433">
    <property type="entry name" value="Rick_17kDa_Anti"/>
    <property type="match status" value="1"/>
</dbReference>
<dbReference type="PROSITE" id="PS51257">
    <property type="entry name" value="PROKAR_LIPOPROTEIN"/>
    <property type="match status" value="1"/>
</dbReference>
<reference key="1">
    <citation type="journal article" date="1995" name="Mol. Gen. Genet.">
        <title>SlyA, a regulatory protein from Salmonella typhimurium, induces a haemolytic and pore-forming protein in Escherichia coli.</title>
        <authorList>
            <person name="Ludwig A."/>
            <person name="Tengel C."/>
            <person name="Bauer S."/>
            <person name="Bubert A."/>
            <person name="Benz R."/>
            <person name="Mollenkopf H.-J."/>
            <person name="Goebel W."/>
        </authorList>
    </citation>
    <scope>NUCLEOTIDE SEQUENCE [GENOMIC DNA]</scope>
    <scope>DIACYLGLYCEROL AT CYS-18</scope>
    <scope>PALMITOYLATION AT CYS-18</scope>
</reference>
<reference key="2">
    <citation type="journal article" date="2001" name="Nature">
        <title>Complete genome sequence of Salmonella enterica serovar Typhimurium LT2.</title>
        <authorList>
            <person name="McClelland M."/>
            <person name="Sanderson K.E."/>
            <person name="Spieth J."/>
            <person name="Clifton S.W."/>
            <person name="Latreille P."/>
            <person name="Courtney L."/>
            <person name="Porwollik S."/>
            <person name="Ali J."/>
            <person name="Dante M."/>
            <person name="Du F."/>
            <person name="Hou S."/>
            <person name="Layman D."/>
            <person name="Leonard S."/>
            <person name="Nguyen C."/>
            <person name="Scott K."/>
            <person name="Holmes A."/>
            <person name="Grewal N."/>
            <person name="Mulvaney E."/>
            <person name="Ryan E."/>
            <person name="Sun H."/>
            <person name="Florea L."/>
            <person name="Miller W."/>
            <person name="Stoneking T."/>
            <person name="Nhan M."/>
            <person name="Waterston R."/>
            <person name="Wilson R.K."/>
        </authorList>
    </citation>
    <scope>NUCLEOTIDE SEQUENCE [LARGE SCALE GENOMIC DNA]</scope>
    <source>
        <strain>LT2 / SGSC1412 / ATCC 700720</strain>
    </source>
</reference>
<protein>
    <recommendedName>
        <fullName>Outer membrane lipoprotein SlyB</fullName>
    </recommendedName>
</protein>
<feature type="signal peptide">
    <location>
        <begin position="1"/>
        <end position="17"/>
    </location>
</feature>
<feature type="chain" id="PRO_0000018164" description="Outer membrane lipoprotein SlyB">
    <location>
        <begin position="18"/>
        <end position="155"/>
    </location>
</feature>
<feature type="lipid moiety-binding region" description="N-palmitoyl cysteine" evidence="3">
    <location>
        <position position="18"/>
    </location>
</feature>
<feature type="lipid moiety-binding region" description="S-diacylglycerol cysteine" evidence="1 3">
    <location>
        <position position="18"/>
    </location>
</feature>
<sequence length="155" mass="15548">MIKRVLAVSLMGLSLAGCVNNDSLSGDVYTASEAKQVQNVTYGTIVNVRPVQIQGGDDSNVIGAIGGAVLGGFLGNTIGGGTGRSLATAAGAVAGGVAGQGVQSAMNKTQGVELEIRKDDGNTIMVVQKQGNTRFSAGQRVVLASNGSQVTVSPR</sequence>
<gene>
    <name type="primary">slyB</name>
    <name type="ordered locus">STM1445</name>
</gene>
<proteinExistence type="evidence at protein level"/>